<sequence length="549" mass="63310">MTLTSIRRGYHVIKTLLQYGLDEVLPPKMTPWYFTLARSSLFWIRNKHKSKPGGERLKLAMQELGPVYIKLGQMLSTRRDLLSDEWAIELAMLQDKVPPFDGVLARKAIEAELKASIESLFDDFDETPLASASISQVHTATLKSNGKAVVLKVLRPNVEAKILADLQLMSQTANLLEYFLGEGNRLRPAEVIEDYRVTILGELNLKLEALNAIKLRNNFLNSDALYVPYVYEEFCYPRLMVMERIYGIPVSDIAALKAQGTNFKLLAERGVELFFTQVFRDNFFHADMHPGNIFISRDHPENPYYIGLDCGIMGTLSEVDKRYLAENFLAFFNRDYHRIAQLYIESGWVSEKTDLQAFEQAIKVVCEPMFNKPLDEISFGHVLLELFRTARSFDIVVQPQLVLLEKTLLYIEGLGRQLYPQLDLWQTAKPFLEQWMAEQVGPKAMFKKVSTKLPYWSDKLPEFPELIYDNLKLGRKLLSSQQQMLDKYLKHQQQAHKSNYMLITSAVLLICGTLLFNQDATLWSPYVCLTSGVLMWFIGWRSRPKNRKF</sequence>
<comment type="function">
    <text evidence="1">Is probably a protein kinase regulator of UbiI activity which is involved in aerobic coenzyme Q (ubiquinone) biosynthesis.</text>
</comment>
<comment type="pathway">
    <text>Cofactor biosynthesis; ubiquinone biosynthesis [regulation].</text>
</comment>
<comment type="subcellular location">
    <subcellularLocation>
        <location evidence="1">Cell inner membrane</location>
        <topology evidence="1">Multi-pass membrane protein</topology>
    </subcellularLocation>
</comment>
<comment type="similarity">
    <text evidence="1">Belongs to the ABC1 family. UbiB subfamily.</text>
</comment>
<dbReference type="EC" id="2.7.-.-" evidence="1"/>
<dbReference type="EMBL" id="CP000681">
    <property type="protein sequence ID" value="ABP74236.1"/>
    <property type="molecule type" value="Genomic_DNA"/>
</dbReference>
<dbReference type="SMR" id="A4Y2Q3"/>
<dbReference type="STRING" id="319224.Sputcn32_0504"/>
<dbReference type="KEGG" id="spc:Sputcn32_0504"/>
<dbReference type="eggNOG" id="COG0661">
    <property type="taxonomic scope" value="Bacteria"/>
</dbReference>
<dbReference type="HOGENOM" id="CLU_006533_0_0_6"/>
<dbReference type="UniPathway" id="UPA00232"/>
<dbReference type="GO" id="GO:0005886">
    <property type="term" value="C:plasma membrane"/>
    <property type="evidence" value="ECO:0007669"/>
    <property type="project" value="UniProtKB-SubCell"/>
</dbReference>
<dbReference type="GO" id="GO:0005524">
    <property type="term" value="F:ATP binding"/>
    <property type="evidence" value="ECO:0007669"/>
    <property type="project" value="UniProtKB-KW"/>
</dbReference>
<dbReference type="GO" id="GO:0004672">
    <property type="term" value="F:protein kinase activity"/>
    <property type="evidence" value="ECO:0007669"/>
    <property type="project" value="UniProtKB-UniRule"/>
</dbReference>
<dbReference type="GO" id="GO:0010795">
    <property type="term" value="P:regulation of ubiquinone biosynthetic process"/>
    <property type="evidence" value="ECO:0007669"/>
    <property type="project" value="UniProtKB-UniRule"/>
</dbReference>
<dbReference type="GO" id="GO:0006744">
    <property type="term" value="P:ubiquinone biosynthetic process"/>
    <property type="evidence" value="ECO:0007669"/>
    <property type="project" value="UniProtKB-UniPathway"/>
</dbReference>
<dbReference type="CDD" id="cd13972">
    <property type="entry name" value="UbiB"/>
    <property type="match status" value="1"/>
</dbReference>
<dbReference type="HAMAP" id="MF_00414">
    <property type="entry name" value="UbiB"/>
    <property type="match status" value="1"/>
</dbReference>
<dbReference type="InterPro" id="IPR004147">
    <property type="entry name" value="ABC1_dom"/>
</dbReference>
<dbReference type="InterPro" id="IPR011009">
    <property type="entry name" value="Kinase-like_dom_sf"/>
</dbReference>
<dbReference type="InterPro" id="IPR010232">
    <property type="entry name" value="UbiB"/>
</dbReference>
<dbReference type="InterPro" id="IPR045308">
    <property type="entry name" value="UbiB_bact"/>
</dbReference>
<dbReference type="InterPro" id="IPR050154">
    <property type="entry name" value="UbiB_kinase"/>
</dbReference>
<dbReference type="NCBIfam" id="NF003404">
    <property type="entry name" value="PRK04750.1"/>
    <property type="match status" value="1"/>
</dbReference>
<dbReference type="NCBIfam" id="TIGR01982">
    <property type="entry name" value="UbiB"/>
    <property type="match status" value="1"/>
</dbReference>
<dbReference type="PANTHER" id="PTHR10566">
    <property type="entry name" value="CHAPERONE-ACTIVITY OF BC1 COMPLEX CABC1 -RELATED"/>
    <property type="match status" value="1"/>
</dbReference>
<dbReference type="PANTHER" id="PTHR10566:SF113">
    <property type="entry name" value="PROTEIN ACTIVITY OF BC1 COMPLEX KINASE 7, CHLOROPLASTIC"/>
    <property type="match status" value="1"/>
</dbReference>
<dbReference type="Pfam" id="PF03109">
    <property type="entry name" value="ABC1"/>
    <property type="match status" value="1"/>
</dbReference>
<dbReference type="SUPFAM" id="SSF56112">
    <property type="entry name" value="Protein kinase-like (PK-like)"/>
    <property type="match status" value="1"/>
</dbReference>
<proteinExistence type="inferred from homology"/>
<gene>
    <name evidence="1" type="primary">ubiB</name>
    <name type="ordered locus">Sputcn32_0504</name>
</gene>
<organism>
    <name type="scientific">Shewanella putrefaciens (strain CN-32 / ATCC BAA-453)</name>
    <dbReference type="NCBI Taxonomy" id="319224"/>
    <lineage>
        <taxon>Bacteria</taxon>
        <taxon>Pseudomonadati</taxon>
        <taxon>Pseudomonadota</taxon>
        <taxon>Gammaproteobacteria</taxon>
        <taxon>Alteromonadales</taxon>
        <taxon>Shewanellaceae</taxon>
        <taxon>Shewanella</taxon>
    </lineage>
</organism>
<keyword id="KW-0067">ATP-binding</keyword>
<keyword id="KW-0997">Cell inner membrane</keyword>
<keyword id="KW-1003">Cell membrane</keyword>
<keyword id="KW-0418">Kinase</keyword>
<keyword id="KW-0472">Membrane</keyword>
<keyword id="KW-0547">Nucleotide-binding</keyword>
<keyword id="KW-0808">Transferase</keyword>
<keyword id="KW-0812">Transmembrane</keyword>
<keyword id="KW-1133">Transmembrane helix</keyword>
<keyword id="KW-0831">Ubiquinone biosynthesis</keyword>
<name>UBIB_SHEPC</name>
<evidence type="ECO:0000255" key="1">
    <source>
        <dbReference type="HAMAP-Rule" id="MF_00414"/>
    </source>
</evidence>
<feature type="chain" id="PRO_1000050059" description="Probable protein kinase UbiB">
    <location>
        <begin position="1"/>
        <end position="549"/>
    </location>
</feature>
<feature type="transmembrane region" description="Helical" evidence="1">
    <location>
        <begin position="499"/>
        <end position="516"/>
    </location>
</feature>
<feature type="transmembrane region" description="Helical" evidence="1">
    <location>
        <begin position="521"/>
        <end position="540"/>
    </location>
</feature>
<feature type="domain" description="Protein kinase" evidence="1">
    <location>
        <begin position="123"/>
        <end position="501"/>
    </location>
</feature>
<feature type="active site" description="Proton acceptor" evidence="1">
    <location>
        <position position="287"/>
    </location>
</feature>
<feature type="binding site" evidence="1">
    <location>
        <begin position="129"/>
        <end position="137"/>
    </location>
    <ligand>
        <name>ATP</name>
        <dbReference type="ChEBI" id="CHEBI:30616"/>
    </ligand>
</feature>
<feature type="binding site" evidence="1">
    <location>
        <position position="152"/>
    </location>
    <ligand>
        <name>ATP</name>
        <dbReference type="ChEBI" id="CHEBI:30616"/>
    </ligand>
</feature>
<protein>
    <recommendedName>
        <fullName evidence="1">Probable protein kinase UbiB</fullName>
        <ecNumber evidence="1">2.7.-.-</ecNumber>
    </recommendedName>
    <alternativeName>
        <fullName evidence="1">Ubiquinone biosynthesis protein UbiB</fullName>
    </alternativeName>
</protein>
<accession>A4Y2Q3</accession>
<reference key="1">
    <citation type="submission" date="2007-04" db="EMBL/GenBank/DDBJ databases">
        <title>Complete sequence of Shewanella putrefaciens CN-32.</title>
        <authorList>
            <consortium name="US DOE Joint Genome Institute"/>
            <person name="Copeland A."/>
            <person name="Lucas S."/>
            <person name="Lapidus A."/>
            <person name="Barry K."/>
            <person name="Detter J.C."/>
            <person name="Glavina del Rio T."/>
            <person name="Hammon N."/>
            <person name="Israni S."/>
            <person name="Dalin E."/>
            <person name="Tice H."/>
            <person name="Pitluck S."/>
            <person name="Chain P."/>
            <person name="Malfatti S."/>
            <person name="Shin M."/>
            <person name="Vergez L."/>
            <person name="Schmutz J."/>
            <person name="Larimer F."/>
            <person name="Land M."/>
            <person name="Hauser L."/>
            <person name="Kyrpides N."/>
            <person name="Mikhailova N."/>
            <person name="Romine M.F."/>
            <person name="Fredrickson J."/>
            <person name="Tiedje J."/>
            <person name="Richardson P."/>
        </authorList>
    </citation>
    <scope>NUCLEOTIDE SEQUENCE [LARGE SCALE GENOMIC DNA]</scope>
    <source>
        <strain>CN-32 / ATCC BAA-453</strain>
    </source>
</reference>